<accession>Q62II5</accession>
<sequence length="156" mass="17427">MKLHIVAVGHKMPGWIASGFDEYAKRMPPELRIELREVKPELRSGSRTADSVMAAEQQRIEAALPKNARVVALDERGRDWTTMQLAQALPAWQQDGRDVAFVIGGADGLAPALKSRAELLLRVSSLTLPHGMVRVLLAEQLYRAWSITQNHPYHRA</sequence>
<comment type="function">
    <text evidence="1">Specifically methylates the pseudouridine at position 1915 (m3Psi1915) in 23S rRNA.</text>
</comment>
<comment type="catalytic activity">
    <reaction evidence="1">
        <text>pseudouridine(1915) in 23S rRNA + S-adenosyl-L-methionine = N(3)-methylpseudouridine(1915) in 23S rRNA + S-adenosyl-L-homocysteine + H(+)</text>
        <dbReference type="Rhea" id="RHEA:42752"/>
        <dbReference type="Rhea" id="RHEA-COMP:10221"/>
        <dbReference type="Rhea" id="RHEA-COMP:10222"/>
        <dbReference type="ChEBI" id="CHEBI:15378"/>
        <dbReference type="ChEBI" id="CHEBI:57856"/>
        <dbReference type="ChEBI" id="CHEBI:59789"/>
        <dbReference type="ChEBI" id="CHEBI:65314"/>
        <dbReference type="ChEBI" id="CHEBI:74486"/>
        <dbReference type="EC" id="2.1.1.177"/>
    </reaction>
</comment>
<comment type="subunit">
    <text evidence="1">Homodimer.</text>
</comment>
<comment type="subcellular location">
    <subcellularLocation>
        <location evidence="1">Cytoplasm</location>
    </subcellularLocation>
</comment>
<comment type="similarity">
    <text evidence="1">Belongs to the RNA methyltransferase RlmH family.</text>
</comment>
<name>RLMH_BURMA</name>
<proteinExistence type="inferred from homology"/>
<organism>
    <name type="scientific">Burkholderia mallei (strain ATCC 23344)</name>
    <dbReference type="NCBI Taxonomy" id="243160"/>
    <lineage>
        <taxon>Bacteria</taxon>
        <taxon>Pseudomonadati</taxon>
        <taxon>Pseudomonadota</taxon>
        <taxon>Betaproteobacteria</taxon>
        <taxon>Burkholderiales</taxon>
        <taxon>Burkholderiaceae</taxon>
        <taxon>Burkholderia</taxon>
        <taxon>pseudomallei group</taxon>
    </lineage>
</organism>
<feature type="chain" id="PRO_0000198098" description="Ribosomal RNA large subunit methyltransferase H">
    <location>
        <begin position="1"/>
        <end position="156"/>
    </location>
</feature>
<feature type="binding site" evidence="1">
    <location>
        <position position="73"/>
    </location>
    <ligand>
        <name>S-adenosyl-L-methionine</name>
        <dbReference type="ChEBI" id="CHEBI:59789"/>
    </ligand>
</feature>
<feature type="binding site" evidence="1">
    <location>
        <position position="104"/>
    </location>
    <ligand>
        <name>S-adenosyl-L-methionine</name>
        <dbReference type="ChEBI" id="CHEBI:59789"/>
    </ligand>
</feature>
<feature type="binding site" evidence="1">
    <location>
        <begin position="123"/>
        <end position="128"/>
    </location>
    <ligand>
        <name>S-adenosyl-L-methionine</name>
        <dbReference type="ChEBI" id="CHEBI:59789"/>
    </ligand>
</feature>
<gene>
    <name evidence="1" type="primary">rlmH</name>
    <name type="ordered locus">BMA1889</name>
</gene>
<evidence type="ECO:0000255" key="1">
    <source>
        <dbReference type="HAMAP-Rule" id="MF_00658"/>
    </source>
</evidence>
<protein>
    <recommendedName>
        <fullName evidence="1">Ribosomal RNA large subunit methyltransferase H</fullName>
        <ecNumber evidence="1">2.1.1.177</ecNumber>
    </recommendedName>
    <alternativeName>
        <fullName evidence="1">23S rRNA (pseudouridine1915-N3)-methyltransferase</fullName>
    </alternativeName>
    <alternativeName>
        <fullName evidence="1">23S rRNA m3Psi1915 methyltransferase</fullName>
    </alternativeName>
    <alternativeName>
        <fullName evidence="1">rRNA (pseudouridine-N3-)-methyltransferase RlmH</fullName>
    </alternativeName>
</protein>
<keyword id="KW-0963">Cytoplasm</keyword>
<keyword id="KW-0489">Methyltransferase</keyword>
<keyword id="KW-1185">Reference proteome</keyword>
<keyword id="KW-0698">rRNA processing</keyword>
<keyword id="KW-0949">S-adenosyl-L-methionine</keyword>
<keyword id="KW-0808">Transferase</keyword>
<dbReference type="EC" id="2.1.1.177" evidence="1"/>
<dbReference type="EMBL" id="CP000010">
    <property type="protein sequence ID" value="AAU49464.1"/>
    <property type="molecule type" value="Genomic_DNA"/>
</dbReference>
<dbReference type="RefSeq" id="WP_004186098.1">
    <property type="nucleotide sequence ID" value="NC_006348.1"/>
</dbReference>
<dbReference type="RefSeq" id="YP_103485.1">
    <property type="nucleotide sequence ID" value="NC_006348.1"/>
</dbReference>
<dbReference type="SMR" id="Q62II5"/>
<dbReference type="GeneID" id="93059640"/>
<dbReference type="KEGG" id="bma:BMA1889"/>
<dbReference type="PATRIC" id="fig|243160.12.peg.1931"/>
<dbReference type="eggNOG" id="COG1576">
    <property type="taxonomic scope" value="Bacteria"/>
</dbReference>
<dbReference type="HOGENOM" id="CLU_100552_1_0_4"/>
<dbReference type="Proteomes" id="UP000006693">
    <property type="component" value="Chromosome 1"/>
</dbReference>
<dbReference type="GO" id="GO:0005737">
    <property type="term" value="C:cytoplasm"/>
    <property type="evidence" value="ECO:0007669"/>
    <property type="project" value="UniProtKB-SubCell"/>
</dbReference>
<dbReference type="GO" id="GO:0070038">
    <property type="term" value="F:rRNA (pseudouridine-N3-)-methyltransferase activity"/>
    <property type="evidence" value="ECO:0007669"/>
    <property type="project" value="UniProtKB-UniRule"/>
</dbReference>
<dbReference type="CDD" id="cd18081">
    <property type="entry name" value="RlmH-like"/>
    <property type="match status" value="1"/>
</dbReference>
<dbReference type="Gene3D" id="3.40.1280.10">
    <property type="match status" value="1"/>
</dbReference>
<dbReference type="HAMAP" id="MF_00658">
    <property type="entry name" value="23SrRNA_methyltr_H"/>
    <property type="match status" value="1"/>
</dbReference>
<dbReference type="InterPro" id="IPR029028">
    <property type="entry name" value="Alpha/beta_knot_MTases"/>
</dbReference>
<dbReference type="InterPro" id="IPR003742">
    <property type="entry name" value="RlmH-like"/>
</dbReference>
<dbReference type="InterPro" id="IPR029026">
    <property type="entry name" value="tRNA_m1G_MTases_N"/>
</dbReference>
<dbReference type="NCBIfam" id="NF000986">
    <property type="entry name" value="PRK00103.1-4"/>
    <property type="match status" value="1"/>
</dbReference>
<dbReference type="NCBIfam" id="TIGR00246">
    <property type="entry name" value="tRNA_RlmH_YbeA"/>
    <property type="match status" value="1"/>
</dbReference>
<dbReference type="PANTHER" id="PTHR33603">
    <property type="entry name" value="METHYLTRANSFERASE"/>
    <property type="match status" value="1"/>
</dbReference>
<dbReference type="PANTHER" id="PTHR33603:SF1">
    <property type="entry name" value="RIBOSOMAL RNA LARGE SUBUNIT METHYLTRANSFERASE H"/>
    <property type="match status" value="1"/>
</dbReference>
<dbReference type="Pfam" id="PF02590">
    <property type="entry name" value="SPOUT_MTase"/>
    <property type="match status" value="1"/>
</dbReference>
<dbReference type="PIRSF" id="PIRSF004505">
    <property type="entry name" value="MT_bac"/>
    <property type="match status" value="1"/>
</dbReference>
<dbReference type="SUPFAM" id="SSF75217">
    <property type="entry name" value="alpha/beta knot"/>
    <property type="match status" value="1"/>
</dbReference>
<reference key="1">
    <citation type="journal article" date="2004" name="Proc. Natl. Acad. Sci. U.S.A.">
        <title>Structural flexibility in the Burkholderia mallei genome.</title>
        <authorList>
            <person name="Nierman W.C."/>
            <person name="DeShazer D."/>
            <person name="Kim H.S."/>
            <person name="Tettelin H."/>
            <person name="Nelson K.E."/>
            <person name="Feldblyum T.V."/>
            <person name="Ulrich R.L."/>
            <person name="Ronning C.M."/>
            <person name="Brinkac L.M."/>
            <person name="Daugherty S.C."/>
            <person name="Davidsen T.D."/>
            <person name="DeBoy R.T."/>
            <person name="Dimitrov G."/>
            <person name="Dodson R.J."/>
            <person name="Durkin A.S."/>
            <person name="Gwinn M.L."/>
            <person name="Haft D.H."/>
            <person name="Khouri H.M."/>
            <person name="Kolonay J.F."/>
            <person name="Madupu R."/>
            <person name="Mohammoud Y."/>
            <person name="Nelson W.C."/>
            <person name="Radune D."/>
            <person name="Romero C.M."/>
            <person name="Sarria S."/>
            <person name="Selengut J."/>
            <person name="Shamblin C."/>
            <person name="Sullivan S.A."/>
            <person name="White O."/>
            <person name="Yu Y."/>
            <person name="Zafar N."/>
            <person name="Zhou L."/>
            <person name="Fraser C.M."/>
        </authorList>
    </citation>
    <scope>NUCLEOTIDE SEQUENCE [LARGE SCALE GENOMIC DNA]</scope>
    <source>
        <strain>ATCC 23344</strain>
    </source>
</reference>